<protein>
    <recommendedName>
        <fullName evidence="1">Large ribosomal subunit protein bL19</fullName>
    </recommendedName>
    <alternativeName>
        <fullName evidence="2">50S ribosomal protein L19</fullName>
    </alternativeName>
</protein>
<comment type="function">
    <text evidence="1">This protein is located at the 30S-50S ribosomal subunit interface and may play a role in the structure and function of the aminoacyl-tRNA binding site.</text>
</comment>
<comment type="similarity">
    <text evidence="1">Belongs to the bacterial ribosomal protein bL19 family.</text>
</comment>
<evidence type="ECO:0000255" key="1">
    <source>
        <dbReference type="HAMAP-Rule" id="MF_00402"/>
    </source>
</evidence>
<evidence type="ECO:0000305" key="2"/>
<evidence type="ECO:0007829" key="3">
    <source>
        <dbReference type="PDB" id="8CVM"/>
    </source>
</evidence>
<sequence length="117" mass="13079">MSNIIDEIDKASMRDDIPEFRPGDSVKVHVKVVEGSRTRVQVFSGIVISRTGGGVQESFTVRKLSFGTGVERTFPLHSPIIDKIEVDRHGAVRRAKLYYLRGRRGKAAKIKERGSAR</sequence>
<proteinExistence type="evidence at protein level"/>
<dbReference type="EMBL" id="AE017283">
    <property type="protein sequence ID" value="AAT83184.1"/>
    <property type="molecule type" value="Genomic_DNA"/>
</dbReference>
<dbReference type="RefSeq" id="WP_002514242.1">
    <property type="nucleotide sequence ID" value="NZ_CP025935.1"/>
</dbReference>
<dbReference type="PDB" id="8CRX">
    <property type="method" value="EM"/>
    <property type="resolution" value="2.78 A"/>
    <property type="chains" value="o=1-117"/>
</dbReference>
<dbReference type="PDB" id="8CVM">
    <property type="method" value="EM"/>
    <property type="resolution" value="2.66 A"/>
    <property type="chains" value="o=1-117"/>
</dbReference>
<dbReference type="PDBsum" id="8CRX"/>
<dbReference type="PDBsum" id="8CVM"/>
<dbReference type="SMR" id="Q6A7T1"/>
<dbReference type="EnsemblBacteria" id="AAT83184">
    <property type="protein sequence ID" value="AAT83184"/>
    <property type="gene ID" value="PPA1435"/>
</dbReference>
<dbReference type="GeneID" id="92857410"/>
<dbReference type="KEGG" id="pac:PPA1435"/>
<dbReference type="eggNOG" id="COG0335">
    <property type="taxonomic scope" value="Bacteria"/>
</dbReference>
<dbReference type="HOGENOM" id="CLU_103507_2_1_11"/>
<dbReference type="Proteomes" id="UP000000603">
    <property type="component" value="Chromosome"/>
</dbReference>
<dbReference type="GO" id="GO:0022625">
    <property type="term" value="C:cytosolic large ribosomal subunit"/>
    <property type="evidence" value="ECO:0007669"/>
    <property type="project" value="TreeGrafter"/>
</dbReference>
<dbReference type="GO" id="GO:0003735">
    <property type="term" value="F:structural constituent of ribosome"/>
    <property type="evidence" value="ECO:0007669"/>
    <property type="project" value="InterPro"/>
</dbReference>
<dbReference type="GO" id="GO:0006412">
    <property type="term" value="P:translation"/>
    <property type="evidence" value="ECO:0007669"/>
    <property type="project" value="UniProtKB-UniRule"/>
</dbReference>
<dbReference type="FunFam" id="2.30.30.790:FF:000001">
    <property type="entry name" value="50S ribosomal protein L19"/>
    <property type="match status" value="1"/>
</dbReference>
<dbReference type="Gene3D" id="2.30.30.790">
    <property type="match status" value="1"/>
</dbReference>
<dbReference type="HAMAP" id="MF_00402">
    <property type="entry name" value="Ribosomal_bL19"/>
    <property type="match status" value="1"/>
</dbReference>
<dbReference type="InterPro" id="IPR001857">
    <property type="entry name" value="Ribosomal_bL19"/>
</dbReference>
<dbReference type="InterPro" id="IPR018257">
    <property type="entry name" value="Ribosomal_bL19_CS"/>
</dbReference>
<dbReference type="InterPro" id="IPR038657">
    <property type="entry name" value="Ribosomal_bL19_sf"/>
</dbReference>
<dbReference type="InterPro" id="IPR008991">
    <property type="entry name" value="Translation_prot_SH3-like_sf"/>
</dbReference>
<dbReference type="NCBIfam" id="TIGR01024">
    <property type="entry name" value="rplS_bact"/>
    <property type="match status" value="1"/>
</dbReference>
<dbReference type="PANTHER" id="PTHR15680:SF9">
    <property type="entry name" value="LARGE RIBOSOMAL SUBUNIT PROTEIN BL19M"/>
    <property type="match status" value="1"/>
</dbReference>
<dbReference type="PANTHER" id="PTHR15680">
    <property type="entry name" value="RIBOSOMAL PROTEIN L19"/>
    <property type="match status" value="1"/>
</dbReference>
<dbReference type="Pfam" id="PF01245">
    <property type="entry name" value="Ribosomal_L19"/>
    <property type="match status" value="1"/>
</dbReference>
<dbReference type="PIRSF" id="PIRSF002191">
    <property type="entry name" value="Ribosomal_L19"/>
    <property type="match status" value="1"/>
</dbReference>
<dbReference type="PRINTS" id="PR00061">
    <property type="entry name" value="RIBOSOMALL19"/>
</dbReference>
<dbReference type="SUPFAM" id="SSF50104">
    <property type="entry name" value="Translation proteins SH3-like domain"/>
    <property type="match status" value="1"/>
</dbReference>
<dbReference type="PROSITE" id="PS01015">
    <property type="entry name" value="RIBOSOMAL_L19"/>
    <property type="match status" value="1"/>
</dbReference>
<reference key="1">
    <citation type="journal article" date="2004" name="Science">
        <title>The complete genome sequence of Propionibacterium acnes, a commensal of human skin.</title>
        <authorList>
            <person name="Brueggemann H."/>
            <person name="Henne A."/>
            <person name="Hoster F."/>
            <person name="Liesegang H."/>
            <person name="Wiezer A."/>
            <person name="Strittmatter A."/>
            <person name="Hujer S."/>
            <person name="Duerre P."/>
            <person name="Gottschalk G."/>
        </authorList>
    </citation>
    <scope>NUCLEOTIDE SEQUENCE [LARGE SCALE GENOMIC DNA]</scope>
    <source>
        <strain>DSM 16379 / KPA171202</strain>
    </source>
</reference>
<keyword id="KW-0002">3D-structure</keyword>
<keyword id="KW-0687">Ribonucleoprotein</keyword>
<keyword id="KW-0689">Ribosomal protein</keyword>
<gene>
    <name evidence="1" type="primary">rplS</name>
    <name type="ordered locus">PPA1435</name>
</gene>
<name>RL19_CUTAK</name>
<organism>
    <name type="scientific">Cutibacterium acnes (strain DSM 16379 / KPA171202)</name>
    <name type="common">Propionibacterium acnes</name>
    <dbReference type="NCBI Taxonomy" id="267747"/>
    <lineage>
        <taxon>Bacteria</taxon>
        <taxon>Bacillati</taxon>
        <taxon>Actinomycetota</taxon>
        <taxon>Actinomycetes</taxon>
        <taxon>Propionibacteriales</taxon>
        <taxon>Propionibacteriaceae</taxon>
        <taxon>Cutibacterium</taxon>
    </lineage>
</organism>
<accession>Q6A7T1</accession>
<feature type="chain" id="PRO_0000163506" description="Large ribosomal subunit protein bL19">
    <location>
        <begin position="1"/>
        <end position="117"/>
    </location>
</feature>
<feature type="helix" evidence="3">
    <location>
        <begin position="3"/>
        <end position="9"/>
    </location>
</feature>
<feature type="turn" evidence="3">
    <location>
        <begin position="10"/>
        <end position="12"/>
    </location>
</feature>
<feature type="strand" evidence="3">
    <location>
        <begin position="25"/>
        <end position="34"/>
    </location>
</feature>
<feature type="strand" evidence="3">
    <location>
        <begin position="37"/>
        <end position="51"/>
    </location>
</feature>
<feature type="helix" evidence="3">
    <location>
        <begin position="54"/>
        <end position="56"/>
    </location>
</feature>
<feature type="strand" evidence="3">
    <location>
        <begin position="58"/>
        <end position="65"/>
    </location>
</feature>
<feature type="strand" evidence="3">
    <location>
        <begin position="68"/>
        <end position="75"/>
    </location>
</feature>
<feature type="strand" evidence="3">
    <location>
        <begin position="81"/>
        <end position="86"/>
    </location>
</feature>
<feature type="helix" evidence="3">
    <location>
        <begin position="98"/>
        <end position="102"/>
    </location>
</feature>
<feature type="helix" evidence="3">
    <location>
        <begin position="105"/>
        <end position="108"/>
    </location>
</feature>